<geneLocation type="chloroplast"/>
<organism>
    <name type="scientific">Chlamydomonas applanata</name>
    <name type="common">Chlamydomonas humicola</name>
    <dbReference type="NCBI Taxonomy" id="35704"/>
    <lineage>
        <taxon>Eukaryota</taxon>
        <taxon>Viridiplantae</taxon>
        <taxon>Chlorophyta</taxon>
        <taxon>core chlorophytes</taxon>
        <taxon>Chlorophyceae</taxon>
        <taxon>CS clade</taxon>
        <taxon>Chlamydomonadales</taxon>
        <taxon>Chlamydomonadaceae</taxon>
        <taxon>Chlamydomonas</taxon>
    </lineage>
</organism>
<reference key="1">
    <citation type="journal article" date="1993" name="Gene">
        <title>The single group-I intron in the chloroplast rrnL gene of Chlamydomonas humicola encodes a site-specific DNA endonuclease (I-ChuI).</title>
        <authorList>
            <person name="Cote V."/>
            <person name="Mercier J.P."/>
            <person name="Lemieux C."/>
            <person name="Turmel M."/>
        </authorList>
    </citation>
    <scope>NUCLEOTIDE SEQUENCE [GENOMIC DNA]</scope>
</reference>
<protein>
    <recommendedName>
        <fullName>DNA endonuclease I-ChuI</fullName>
        <ecNumber>3.1.-.-</ecNumber>
    </recommendedName>
</protein>
<proteinExistence type="inferred from homology"/>
<name>DNE1_CHLAP</name>
<dbReference type="EC" id="3.1.-.-"/>
<dbReference type="EMBL" id="L06107">
    <property type="protein sequence ID" value="AAA02744.1"/>
    <property type="molecule type" value="Genomic_DNA"/>
</dbReference>
<dbReference type="PIR" id="JC1520">
    <property type="entry name" value="JC1520"/>
</dbReference>
<dbReference type="SMR" id="Q32001"/>
<dbReference type="REBASE" id="2618">
    <property type="entry name" value="I-ChuI"/>
</dbReference>
<dbReference type="GO" id="GO:0009507">
    <property type="term" value="C:chloroplast"/>
    <property type="evidence" value="ECO:0007669"/>
    <property type="project" value="UniProtKB-SubCell"/>
</dbReference>
<dbReference type="GO" id="GO:0004519">
    <property type="term" value="F:endonuclease activity"/>
    <property type="evidence" value="ECO:0007669"/>
    <property type="project" value="UniProtKB-KW"/>
</dbReference>
<dbReference type="GO" id="GO:0006314">
    <property type="term" value="P:intron homing"/>
    <property type="evidence" value="ECO:0007669"/>
    <property type="project" value="UniProtKB-KW"/>
</dbReference>
<dbReference type="Gene3D" id="3.10.28.10">
    <property type="entry name" value="Homing endonucleases"/>
    <property type="match status" value="2"/>
</dbReference>
<dbReference type="InterPro" id="IPR027434">
    <property type="entry name" value="Homing_endonucl"/>
</dbReference>
<dbReference type="InterPro" id="IPR004860">
    <property type="entry name" value="LAGLIDADG_dom"/>
</dbReference>
<dbReference type="Pfam" id="PF03161">
    <property type="entry name" value="LAGLIDADG_2"/>
    <property type="match status" value="1"/>
</dbReference>
<dbReference type="SUPFAM" id="SSF55608">
    <property type="entry name" value="Homing endonucleases"/>
    <property type="match status" value="1"/>
</dbReference>
<evidence type="ECO:0000305" key="1"/>
<keyword id="KW-0150">Chloroplast</keyword>
<keyword id="KW-0255">Endonuclease</keyword>
<keyword id="KW-0378">Hydrolase</keyword>
<keyword id="KW-0404">Intron homing</keyword>
<keyword id="KW-0540">Nuclease</keyword>
<keyword id="KW-0934">Plastid</keyword>
<sequence>MSLTQQQKDLIFGSLLGDGNLQTGSVGRTWRYRALHKSEHQTYLFHKYEILKPLCGENTLPTESIVFDERTNKEVKRWFFNTLTNPSLKFFADMFYTYDQNTQKWVKDVPVKVQTFLTPQALAYFYIDDGALKWLNKSNAMQICTESFSQGGTIRIQKALKTLYNIDTTLTKKTLQDGRIGYRIAIPEASSGAFREVIKPFLVDCMRYKVSDGNKGHL</sequence>
<feature type="chain" id="PRO_0000192782" description="DNA endonuclease I-ChuI">
    <location>
        <begin position="1"/>
        <end position="218"/>
    </location>
</feature>
<comment type="function">
    <text>Probable endonuclease involved in intron homing. Encoded in the group-I intron of the subunit rRNA-encoding gene (rrnL), it generates a staggered cut with 4-nt (CTCG) 3'-OH overhangs 2 bp downstream from the intron insertion site.</text>
</comment>
<comment type="subcellular location">
    <subcellularLocation>
        <location>Plastid</location>
        <location>Chloroplast</location>
    </subcellularLocation>
</comment>
<comment type="similarity">
    <text evidence="1">Belongs to the LAGLIDADG endonuclease family.</text>
</comment>
<accession>Q32001</accession>